<protein>
    <recommendedName>
        <fullName evidence="2">Histidine--tRNA ligase</fullName>
        <ecNumber evidence="2">6.1.1.21</ecNumber>
    </recommendedName>
    <alternativeName>
        <fullName evidence="2">Histidyl-tRNA synthetase</fullName>
        <shortName evidence="2">HisRS</shortName>
    </alternativeName>
</protein>
<keyword id="KW-0030">Aminoacyl-tRNA synthetase</keyword>
<keyword id="KW-0067">ATP-binding</keyword>
<keyword id="KW-0963">Cytoplasm</keyword>
<keyword id="KW-0436">Ligase</keyword>
<keyword id="KW-0547">Nucleotide-binding</keyword>
<keyword id="KW-0648">Protein biosynthesis</keyword>
<keyword id="KW-1185">Reference proteome</keyword>
<evidence type="ECO:0000250" key="1"/>
<evidence type="ECO:0000255" key="2">
    <source>
        <dbReference type="HAMAP-Rule" id="MF_00127"/>
    </source>
</evidence>
<reference key="1">
    <citation type="journal article" date="2002" name="Nucleic Acids Res.">
        <title>Genome sequence of Shigella flexneri 2a: insights into pathogenicity through comparison with genomes of Escherichia coli K12 and O157.</title>
        <authorList>
            <person name="Jin Q."/>
            <person name="Yuan Z."/>
            <person name="Xu J."/>
            <person name="Wang Y."/>
            <person name="Shen Y."/>
            <person name="Lu W."/>
            <person name="Wang J."/>
            <person name="Liu H."/>
            <person name="Yang J."/>
            <person name="Yang F."/>
            <person name="Zhang X."/>
            <person name="Zhang J."/>
            <person name="Yang G."/>
            <person name="Wu H."/>
            <person name="Qu D."/>
            <person name="Dong J."/>
            <person name="Sun L."/>
            <person name="Xue Y."/>
            <person name="Zhao A."/>
            <person name="Gao Y."/>
            <person name="Zhu J."/>
            <person name="Kan B."/>
            <person name="Ding K."/>
            <person name="Chen S."/>
            <person name="Cheng H."/>
            <person name="Yao Z."/>
            <person name="He B."/>
            <person name="Chen R."/>
            <person name="Ma D."/>
            <person name="Qiang B."/>
            <person name="Wen Y."/>
            <person name="Hou Y."/>
            <person name="Yu J."/>
        </authorList>
    </citation>
    <scope>NUCLEOTIDE SEQUENCE [LARGE SCALE GENOMIC DNA]</scope>
    <source>
        <strain>301 / Serotype 2a</strain>
    </source>
</reference>
<reference key="2">
    <citation type="journal article" date="2003" name="Infect. Immun.">
        <title>Complete genome sequence and comparative genomics of Shigella flexneri serotype 2a strain 2457T.</title>
        <authorList>
            <person name="Wei J."/>
            <person name="Goldberg M.B."/>
            <person name="Burland V."/>
            <person name="Venkatesan M.M."/>
            <person name="Deng W."/>
            <person name="Fournier G."/>
            <person name="Mayhew G.F."/>
            <person name="Plunkett G. III"/>
            <person name="Rose D.J."/>
            <person name="Darling A."/>
            <person name="Mau B."/>
            <person name="Perna N.T."/>
            <person name="Payne S.M."/>
            <person name="Runyen-Janecky L.J."/>
            <person name="Zhou S."/>
            <person name="Schwartz D.C."/>
            <person name="Blattner F.R."/>
        </authorList>
    </citation>
    <scope>NUCLEOTIDE SEQUENCE [LARGE SCALE GENOMIC DNA]</scope>
    <source>
        <strain>ATCC 700930 / 2457T / Serotype 2a</strain>
    </source>
</reference>
<name>SYH_SHIFL</name>
<proteinExistence type="inferred from homology"/>
<organism>
    <name type="scientific">Shigella flexneri</name>
    <dbReference type="NCBI Taxonomy" id="623"/>
    <lineage>
        <taxon>Bacteria</taxon>
        <taxon>Pseudomonadati</taxon>
        <taxon>Pseudomonadota</taxon>
        <taxon>Gammaproteobacteria</taxon>
        <taxon>Enterobacterales</taxon>
        <taxon>Enterobacteriaceae</taxon>
        <taxon>Shigella</taxon>
    </lineage>
</organism>
<feature type="initiator methionine" description="Removed" evidence="1">
    <location>
        <position position="1"/>
    </location>
</feature>
<feature type="chain" id="PRO_0000136247" description="Histidine--tRNA ligase">
    <location>
        <begin position="2"/>
        <end position="424"/>
    </location>
</feature>
<gene>
    <name evidence="2" type="primary">hisS</name>
    <name type="ordered locus">SF2560</name>
    <name type="ordered locus">S2732</name>
</gene>
<sequence>MAKNIQAIRGMNDYLPGETAIWQRIEGTLKNVLGSYGYSEIRLPIVEQTPLFKRAIGEVTDVVEKEMYTFEDRNGDSLTLRPEGTAGCVRAGIEHGLLYNQEQRLWYIGPMFRHERPQKGRYRQFHQLGCEVFGLQGPDIDAELIMLTARWWRALGIFEHVTLELNSIGSLEARANYRDALVAFLEQHKEKLDEDCKRRMYTNPLRVLDSKNPEVQALLNDAPALGDYLDEESREHFAGLCKLLESAGIAYTVNQRLVRGLDYYNRTVFEWVTNSLGSQGTVCAGGRYDGLVEQLGGRATPAVGFAMGLERLVLLVQAVNPEFKADPVVDIYLVASGADTQSAAMALAERLRDELLGVKLMTNHGGGNFKKQFARADKWGARVAVVLGESEVANGTAVVKDLRSGEQTAVAQDSVAAHLRTLLG</sequence>
<comment type="catalytic activity">
    <reaction evidence="2">
        <text>tRNA(His) + L-histidine + ATP = L-histidyl-tRNA(His) + AMP + diphosphate + H(+)</text>
        <dbReference type="Rhea" id="RHEA:17313"/>
        <dbReference type="Rhea" id="RHEA-COMP:9665"/>
        <dbReference type="Rhea" id="RHEA-COMP:9689"/>
        <dbReference type="ChEBI" id="CHEBI:15378"/>
        <dbReference type="ChEBI" id="CHEBI:30616"/>
        <dbReference type="ChEBI" id="CHEBI:33019"/>
        <dbReference type="ChEBI" id="CHEBI:57595"/>
        <dbReference type="ChEBI" id="CHEBI:78442"/>
        <dbReference type="ChEBI" id="CHEBI:78527"/>
        <dbReference type="ChEBI" id="CHEBI:456215"/>
        <dbReference type="EC" id="6.1.1.21"/>
    </reaction>
</comment>
<comment type="subunit">
    <text evidence="2">Homodimer.</text>
</comment>
<comment type="subcellular location">
    <subcellularLocation>
        <location evidence="2">Cytoplasm</location>
    </subcellularLocation>
</comment>
<comment type="similarity">
    <text evidence="2">Belongs to the class-II aminoacyl-tRNA synthetase family.</text>
</comment>
<dbReference type="EC" id="6.1.1.21" evidence="2"/>
<dbReference type="EMBL" id="AE005674">
    <property type="protein sequence ID" value="AAN44060.1"/>
    <property type="molecule type" value="Genomic_DNA"/>
</dbReference>
<dbReference type="EMBL" id="AE014073">
    <property type="protein sequence ID" value="AAP17887.1"/>
    <property type="molecule type" value="Genomic_DNA"/>
</dbReference>
<dbReference type="RefSeq" id="NP_708353.1">
    <property type="nucleotide sequence ID" value="NC_004337.2"/>
</dbReference>
<dbReference type="RefSeq" id="WP_001107149.1">
    <property type="nucleotide sequence ID" value="NZ_WPGW01000078.1"/>
</dbReference>
<dbReference type="SMR" id="Q83K44"/>
<dbReference type="STRING" id="198214.SF2560"/>
<dbReference type="PaxDb" id="198214-SF2560"/>
<dbReference type="GeneID" id="1025634"/>
<dbReference type="KEGG" id="sfl:SF2560"/>
<dbReference type="KEGG" id="sfx:S2732"/>
<dbReference type="PATRIC" id="fig|198214.7.peg.3058"/>
<dbReference type="HOGENOM" id="CLU_025113_1_1_6"/>
<dbReference type="Proteomes" id="UP000001006">
    <property type="component" value="Chromosome"/>
</dbReference>
<dbReference type="Proteomes" id="UP000002673">
    <property type="component" value="Chromosome"/>
</dbReference>
<dbReference type="GO" id="GO:0005737">
    <property type="term" value="C:cytoplasm"/>
    <property type="evidence" value="ECO:0007669"/>
    <property type="project" value="UniProtKB-SubCell"/>
</dbReference>
<dbReference type="GO" id="GO:0005524">
    <property type="term" value="F:ATP binding"/>
    <property type="evidence" value="ECO:0007669"/>
    <property type="project" value="UniProtKB-UniRule"/>
</dbReference>
<dbReference type="GO" id="GO:0004821">
    <property type="term" value="F:histidine-tRNA ligase activity"/>
    <property type="evidence" value="ECO:0007669"/>
    <property type="project" value="UniProtKB-UniRule"/>
</dbReference>
<dbReference type="GO" id="GO:0006427">
    <property type="term" value="P:histidyl-tRNA aminoacylation"/>
    <property type="evidence" value="ECO:0007669"/>
    <property type="project" value="UniProtKB-UniRule"/>
</dbReference>
<dbReference type="CDD" id="cd00773">
    <property type="entry name" value="HisRS-like_core"/>
    <property type="match status" value="1"/>
</dbReference>
<dbReference type="CDD" id="cd00859">
    <property type="entry name" value="HisRS_anticodon"/>
    <property type="match status" value="1"/>
</dbReference>
<dbReference type="FunFam" id="3.30.930.10:FF:000005">
    <property type="entry name" value="Histidine--tRNA ligase"/>
    <property type="match status" value="1"/>
</dbReference>
<dbReference type="FunFam" id="3.40.50.800:FF:000007">
    <property type="entry name" value="Histidine--tRNA ligase"/>
    <property type="match status" value="1"/>
</dbReference>
<dbReference type="Gene3D" id="3.40.50.800">
    <property type="entry name" value="Anticodon-binding domain"/>
    <property type="match status" value="1"/>
</dbReference>
<dbReference type="Gene3D" id="3.30.930.10">
    <property type="entry name" value="Bira Bifunctional Protein, Domain 2"/>
    <property type="match status" value="1"/>
</dbReference>
<dbReference type="HAMAP" id="MF_00127">
    <property type="entry name" value="His_tRNA_synth"/>
    <property type="match status" value="1"/>
</dbReference>
<dbReference type="InterPro" id="IPR006195">
    <property type="entry name" value="aa-tRNA-synth_II"/>
</dbReference>
<dbReference type="InterPro" id="IPR045864">
    <property type="entry name" value="aa-tRNA-synth_II/BPL/LPL"/>
</dbReference>
<dbReference type="InterPro" id="IPR004154">
    <property type="entry name" value="Anticodon-bd"/>
</dbReference>
<dbReference type="InterPro" id="IPR036621">
    <property type="entry name" value="Anticodon-bd_dom_sf"/>
</dbReference>
<dbReference type="InterPro" id="IPR015807">
    <property type="entry name" value="His-tRNA-ligase"/>
</dbReference>
<dbReference type="InterPro" id="IPR041715">
    <property type="entry name" value="HisRS-like_core"/>
</dbReference>
<dbReference type="InterPro" id="IPR004516">
    <property type="entry name" value="HisRS/HisZ"/>
</dbReference>
<dbReference type="InterPro" id="IPR033656">
    <property type="entry name" value="HisRS_anticodon"/>
</dbReference>
<dbReference type="NCBIfam" id="TIGR00442">
    <property type="entry name" value="hisS"/>
    <property type="match status" value="1"/>
</dbReference>
<dbReference type="PANTHER" id="PTHR43707:SF1">
    <property type="entry name" value="HISTIDINE--TRNA LIGASE, MITOCHONDRIAL-RELATED"/>
    <property type="match status" value="1"/>
</dbReference>
<dbReference type="PANTHER" id="PTHR43707">
    <property type="entry name" value="HISTIDYL-TRNA SYNTHETASE"/>
    <property type="match status" value="1"/>
</dbReference>
<dbReference type="Pfam" id="PF03129">
    <property type="entry name" value="HGTP_anticodon"/>
    <property type="match status" value="1"/>
</dbReference>
<dbReference type="Pfam" id="PF13393">
    <property type="entry name" value="tRNA-synt_His"/>
    <property type="match status" value="1"/>
</dbReference>
<dbReference type="PIRSF" id="PIRSF001549">
    <property type="entry name" value="His-tRNA_synth"/>
    <property type="match status" value="1"/>
</dbReference>
<dbReference type="SUPFAM" id="SSF52954">
    <property type="entry name" value="Class II aaRS ABD-related"/>
    <property type="match status" value="1"/>
</dbReference>
<dbReference type="SUPFAM" id="SSF55681">
    <property type="entry name" value="Class II aaRS and biotin synthetases"/>
    <property type="match status" value="1"/>
</dbReference>
<dbReference type="PROSITE" id="PS50862">
    <property type="entry name" value="AA_TRNA_LIGASE_II"/>
    <property type="match status" value="1"/>
</dbReference>
<accession>Q83K44</accession>